<name>UL128_HCMVM</name>
<sequence length="171" mass="19773">MSPKNLTPFLTALWLLLDHSRVPRVRAEECCEFINVNHPPERCYDFKMCNRFTVALRCPDGEVCYSPEKTAEIRGIVTTMTHSLTRQVVHNKLTSCNYNPLYLEADGRIRCGKVNDKAQYLLGAAGSVPYRWINLEYDKITRIVGLNQYLESVKKHKRLDVCRAKMGYMLQ</sequence>
<accession>V9LLX6</accession>
<proteinExistence type="evidence at protein level"/>
<protein>
    <recommendedName>
        <fullName>Envelope protein UL128</fullName>
    </recommendedName>
</protein>
<organism>
    <name type="scientific">Human cytomegalovirus (strain Merlin)</name>
    <name type="common">HHV-5</name>
    <name type="synonym">Human herpesvirus 5</name>
    <dbReference type="NCBI Taxonomy" id="295027"/>
    <lineage>
        <taxon>Viruses</taxon>
        <taxon>Duplodnaviria</taxon>
        <taxon>Heunggongvirae</taxon>
        <taxon>Peploviricota</taxon>
        <taxon>Herviviricetes</taxon>
        <taxon>Herpesvirales</taxon>
        <taxon>Orthoherpesviridae</taxon>
        <taxon>Betaherpesvirinae</taxon>
        <taxon>Cytomegalovirus</taxon>
        <taxon>Cytomegalovirus humanbeta5</taxon>
        <taxon>Human cytomegalovirus</taxon>
    </lineage>
</organism>
<comment type="function">
    <text evidence="1 2 4 5">Plays a role in viral entry into host cells. Forms a pentameric complex at the surface of the viral envelope together with gH, gL, UL130 and UL131. This complex is required for entry in epithelial, endothelial and myeloid host cells (PubMed:17942555, PubMed:23853586). Mechanistically, engages host receptor(s) including neurophilin 2/NRP2 to mediate infection (PubMed:30057110). Additionally, monomeric UL128 may interfere with certain inflammatory cytokines to increase infection and dissemination by blocking monocytes migration (PubMed:21367908).</text>
</comment>
<comment type="subunit">
    <text evidence="1 5">Forms the envelope pentamer complex (PC) composed of gH, gL, UL128, UL130, and UL131A (PubMed:17942555). The pentamer interacts with host NRP2 (PubMed:30057110).</text>
</comment>
<comment type="subcellular location">
    <subcellularLocation>
        <location evidence="3">Virion membrane</location>
    </subcellularLocation>
    <text evidence="3">Found as a pentameric complex at the surface of virion envelope.</text>
</comment>
<comment type="similarity">
    <text evidence="6">Belongs to the HHV-5 UL128 protein family.</text>
</comment>
<reference key="1">
    <citation type="submission" date="2012-08" db="EMBL/GenBank/DDBJ databases">
        <title>Human cytomegalovirus RL11 gene family: variation, recombination and transcription.</title>
        <authorList>
            <person name="Davison A.J."/>
        </authorList>
    </citation>
    <scope>NUCLEOTIDE SEQUENCE [LARGE SCALE GENOMIC DNA]</scope>
</reference>
<reference key="2">
    <citation type="journal article" date="2008" name="J. Virol.">
        <title>Characterization of the human cytomegalovirus gH/gL/UL128-131 complex that mediates entry into epithelial and endothelial cells.</title>
        <authorList>
            <person name="Ryckman B.J."/>
            <person name="Rainish B.L."/>
            <person name="Chase M.C."/>
            <person name="Borton J.A."/>
            <person name="Nelson J.A."/>
            <person name="Jarvis M.A."/>
            <person name="Johnson D.C."/>
        </authorList>
    </citation>
    <scope>FUNCTION</scope>
    <scope>INTERACTION WITH GH; GL; UL130 AND UL131A</scope>
</reference>
<reference key="3">
    <citation type="journal article" date="2011" name="J. Virol.">
        <title>Protein pUL128 of human cytomegalovirus is necessary for monocyte infection and blocking of migration.</title>
        <authorList>
            <person name="Straschewski S."/>
            <person name="Patrone M."/>
            <person name="Walther P."/>
            <person name="Gallina A."/>
            <person name="Mertens T."/>
            <person name="Frascaroli G."/>
        </authorList>
    </citation>
    <scope>FUNCTION</scope>
</reference>
<reference key="4">
    <citation type="journal article" date="2013" name="PLoS Pathog.">
        <title>The HCMV gH/gL/UL128-131 complex triggers the specific cellular activation required for efficient viral internalization into target monocytes.</title>
        <authorList>
            <person name="Nogalski M.T."/>
            <person name="Chan G.C."/>
            <person name="Stevenson E.V."/>
            <person name="Collins-McMillen D.K."/>
            <person name="Yurochko A.D."/>
        </authorList>
    </citation>
    <scope>FUNCTION</scope>
</reference>
<reference key="5">
    <citation type="journal article" date="2013" name="J. Virol.">
        <title>Comparative analysis of gO isoforms reveals that strains of human cytomegalovirus differ in the ratio of gH/gL/gO and gH/gL/UL128-131 in the virion envelope.</title>
        <authorList>
            <person name="Zhou M."/>
            <person name="Yu Q."/>
            <person name="Wechsler A."/>
            <person name="Ryckman B.J."/>
        </authorList>
    </citation>
    <scope>SUBCELLULAR LOCATION</scope>
</reference>
<reference key="6">
    <citation type="journal article" date="2014" name="Acta Virol.">
        <title>Characteristics and functions of human cytomegalovirus UL128 gene/protein.</title>
        <authorList>
            <person name="Tao R."/>
            <person name="Xu J."/>
            <person name="Gao H."/>
            <person name="Zhao W."/>
            <person name="Shang S."/>
        </authorList>
    </citation>
    <scope>REVIEW</scope>
</reference>
<reference key="7">
    <citation type="journal article" date="2018" name="Cell">
        <title>An Unbiased Screen for Human Cytomegalovirus Identifies Neuropilin-2 as a Central Viral Receptor.</title>
        <authorList>
            <person name="Martinez-Martin N."/>
            <person name="Marcandalli J."/>
            <person name="Huang C.S."/>
            <person name="Arthur C.P."/>
            <person name="Perotti M."/>
            <person name="Foglierini M."/>
            <person name="Ho H."/>
            <person name="Dosey A.M."/>
            <person name="Shriver S."/>
            <person name="Payandeh J."/>
            <person name="Leitner A."/>
            <person name="Lanzavecchia A."/>
            <person name="Perez L."/>
            <person name="Ciferri C."/>
        </authorList>
    </citation>
    <scope>FUNCTION</scope>
    <scope>INTERACTION WITH HOST NRP2</scope>
</reference>
<organismHost>
    <name type="scientific">Homo sapiens</name>
    <name type="common">Human</name>
    <dbReference type="NCBI Taxonomy" id="9606"/>
</organismHost>
<dbReference type="EMBL" id="JX512197">
    <property type="protein sequence ID" value="AFR54607.1"/>
    <property type="molecule type" value="Genomic_DNA"/>
</dbReference>
<dbReference type="PDB" id="7T4Q">
    <property type="method" value="EM"/>
    <property type="resolution" value="2.90 A"/>
    <property type="chains" value="C=1-171"/>
</dbReference>
<dbReference type="PDB" id="7T4R">
    <property type="method" value="EM"/>
    <property type="resolution" value="3.30 A"/>
    <property type="chains" value="D/M=1-171"/>
</dbReference>
<dbReference type="PDB" id="7T4S">
    <property type="method" value="EM"/>
    <property type="resolution" value="3.10 A"/>
    <property type="chains" value="C=1-171"/>
</dbReference>
<dbReference type="PDBsum" id="7T4Q"/>
<dbReference type="PDBsum" id="7T4R"/>
<dbReference type="PDBsum" id="7T4S"/>
<dbReference type="SMR" id="V9LLX6"/>
<dbReference type="Proteomes" id="UP000169440">
    <property type="component" value="Segment"/>
</dbReference>
<dbReference type="GO" id="GO:0016020">
    <property type="term" value="C:membrane"/>
    <property type="evidence" value="ECO:0007669"/>
    <property type="project" value="UniProtKB-KW"/>
</dbReference>
<dbReference type="GO" id="GO:0019031">
    <property type="term" value="C:viral envelope"/>
    <property type="evidence" value="ECO:0007669"/>
    <property type="project" value="UniProtKB-KW"/>
</dbReference>
<dbReference type="GO" id="GO:0055036">
    <property type="term" value="C:virion membrane"/>
    <property type="evidence" value="ECO:0007669"/>
    <property type="project" value="UniProtKB-SubCell"/>
</dbReference>
<dbReference type="GO" id="GO:0098670">
    <property type="term" value="P:entry receptor-mediated virion attachment to host cell"/>
    <property type="evidence" value="ECO:0007669"/>
    <property type="project" value="UniProtKB-KW"/>
</dbReference>
<dbReference type="GO" id="GO:0046718">
    <property type="term" value="P:symbiont entry into host cell"/>
    <property type="evidence" value="ECO:0007669"/>
    <property type="project" value="UniProtKB-KW"/>
</dbReference>
<feature type="chain" id="PRO_0000445468" description="Envelope protein UL128">
    <location>
        <begin position="1"/>
        <end position="171"/>
    </location>
</feature>
<feature type="strand" evidence="7">
    <location>
        <begin position="45"/>
        <end position="50"/>
    </location>
</feature>
<feature type="strand" evidence="7">
    <location>
        <begin position="53"/>
        <end position="57"/>
    </location>
</feature>
<feature type="strand" evidence="7">
    <location>
        <begin position="59"/>
        <end position="65"/>
    </location>
</feature>
<feature type="strand" evidence="8">
    <location>
        <begin position="68"/>
        <end position="71"/>
    </location>
</feature>
<feature type="helix" evidence="7">
    <location>
        <begin position="72"/>
        <end position="81"/>
    </location>
</feature>
<feature type="helix" evidence="7">
    <location>
        <begin position="86"/>
        <end position="92"/>
    </location>
</feature>
<feature type="helix" evidence="7">
    <location>
        <begin position="94"/>
        <end position="96"/>
    </location>
</feature>
<feature type="strand" evidence="7">
    <location>
        <begin position="101"/>
        <end position="103"/>
    </location>
</feature>
<feature type="strand" evidence="7">
    <location>
        <begin position="109"/>
        <end position="111"/>
    </location>
</feature>
<feature type="helix" evidence="7">
    <location>
        <begin position="118"/>
        <end position="120"/>
    </location>
</feature>
<feature type="strand" evidence="7">
    <location>
        <begin position="121"/>
        <end position="123"/>
    </location>
</feature>
<feature type="strand" evidence="7">
    <location>
        <begin position="125"/>
        <end position="127"/>
    </location>
</feature>
<feature type="strand" evidence="7">
    <location>
        <begin position="130"/>
        <end position="132"/>
    </location>
</feature>
<feature type="helix" evidence="7">
    <location>
        <begin position="146"/>
        <end position="155"/>
    </location>
</feature>
<feature type="strand" evidence="8">
    <location>
        <begin position="165"/>
        <end position="167"/>
    </location>
</feature>
<gene>
    <name type="primary">UL128</name>
</gene>
<keyword id="KW-0002">3D-structure</keyword>
<keyword id="KW-0945">Host-virus interaction</keyword>
<keyword id="KW-0472">Membrane</keyword>
<keyword id="KW-1161">Viral attachment to host cell</keyword>
<keyword id="KW-1234">Viral attachment to host entry receptor</keyword>
<keyword id="KW-0261">Viral envelope protein</keyword>
<keyword id="KW-0946">Virion</keyword>
<keyword id="KW-1160">Virus entry into host cell</keyword>
<evidence type="ECO:0000269" key="1">
    <source>
    </source>
</evidence>
<evidence type="ECO:0000269" key="2">
    <source>
    </source>
</evidence>
<evidence type="ECO:0000269" key="3">
    <source>
    </source>
</evidence>
<evidence type="ECO:0000269" key="4">
    <source>
    </source>
</evidence>
<evidence type="ECO:0000269" key="5">
    <source>
    </source>
</evidence>
<evidence type="ECO:0000305" key="6"/>
<evidence type="ECO:0007829" key="7">
    <source>
        <dbReference type="PDB" id="7T4Q"/>
    </source>
</evidence>
<evidence type="ECO:0007829" key="8">
    <source>
        <dbReference type="PDB" id="7T4R"/>
    </source>
</evidence>